<keyword id="KW-0119">Carbohydrate metabolism</keyword>
<keyword id="KW-0963">Cytoplasm</keyword>
<keyword id="KW-0413">Isomerase</keyword>
<keyword id="KW-0479">Metal-binding</keyword>
<keyword id="KW-0862">Zinc</keyword>
<accession>B4RQP9</accession>
<organism>
    <name type="scientific">Neisseria gonorrhoeae (strain NCCP11945)</name>
    <dbReference type="NCBI Taxonomy" id="521006"/>
    <lineage>
        <taxon>Bacteria</taxon>
        <taxon>Pseudomonadati</taxon>
        <taxon>Pseudomonadota</taxon>
        <taxon>Betaproteobacteria</taxon>
        <taxon>Neisseriales</taxon>
        <taxon>Neisseriaceae</taxon>
        <taxon>Neisseria</taxon>
    </lineage>
</organism>
<proteinExistence type="inferred from homology"/>
<dbReference type="EC" id="5.3.1.28" evidence="1"/>
<dbReference type="EMBL" id="CP001050">
    <property type="protein sequence ID" value="ACF30859.1"/>
    <property type="molecule type" value="Genomic_DNA"/>
</dbReference>
<dbReference type="RefSeq" id="WP_003692028.1">
    <property type="nucleotide sequence ID" value="NC_011035.1"/>
</dbReference>
<dbReference type="SMR" id="B4RQP9"/>
<dbReference type="KEGG" id="ngk:NGK_2255"/>
<dbReference type="HOGENOM" id="CLU_080999_4_0_4"/>
<dbReference type="UniPathway" id="UPA00041">
    <property type="reaction ID" value="UER00436"/>
</dbReference>
<dbReference type="Proteomes" id="UP000002564">
    <property type="component" value="Chromosome"/>
</dbReference>
<dbReference type="GO" id="GO:0005737">
    <property type="term" value="C:cytoplasm"/>
    <property type="evidence" value="ECO:0007669"/>
    <property type="project" value="UniProtKB-SubCell"/>
</dbReference>
<dbReference type="GO" id="GO:0097367">
    <property type="term" value="F:carbohydrate derivative binding"/>
    <property type="evidence" value="ECO:0007669"/>
    <property type="project" value="InterPro"/>
</dbReference>
<dbReference type="GO" id="GO:0008968">
    <property type="term" value="F:D-sedoheptulose 7-phosphate isomerase activity"/>
    <property type="evidence" value="ECO:0007669"/>
    <property type="project" value="UniProtKB-UniRule"/>
</dbReference>
<dbReference type="GO" id="GO:0008270">
    <property type="term" value="F:zinc ion binding"/>
    <property type="evidence" value="ECO:0007669"/>
    <property type="project" value="UniProtKB-UniRule"/>
</dbReference>
<dbReference type="GO" id="GO:0005975">
    <property type="term" value="P:carbohydrate metabolic process"/>
    <property type="evidence" value="ECO:0007669"/>
    <property type="project" value="UniProtKB-UniRule"/>
</dbReference>
<dbReference type="GO" id="GO:2001061">
    <property type="term" value="P:D-glycero-D-manno-heptose 7-phosphate biosynthetic process"/>
    <property type="evidence" value="ECO:0007669"/>
    <property type="project" value="UniProtKB-UniPathway"/>
</dbReference>
<dbReference type="CDD" id="cd05006">
    <property type="entry name" value="SIS_GmhA"/>
    <property type="match status" value="1"/>
</dbReference>
<dbReference type="Gene3D" id="3.40.50.10490">
    <property type="entry name" value="Glucose-6-phosphate isomerase like protein, domain 1"/>
    <property type="match status" value="1"/>
</dbReference>
<dbReference type="HAMAP" id="MF_00067">
    <property type="entry name" value="GmhA"/>
    <property type="match status" value="1"/>
</dbReference>
<dbReference type="InterPro" id="IPR035461">
    <property type="entry name" value="GmhA/DiaA"/>
</dbReference>
<dbReference type="InterPro" id="IPR004515">
    <property type="entry name" value="Phosphoheptose_Isoase"/>
</dbReference>
<dbReference type="InterPro" id="IPR001347">
    <property type="entry name" value="SIS_dom"/>
</dbReference>
<dbReference type="InterPro" id="IPR046348">
    <property type="entry name" value="SIS_dom_sf"/>
</dbReference>
<dbReference type="InterPro" id="IPR050099">
    <property type="entry name" value="SIS_GmhA/DiaA_subfam"/>
</dbReference>
<dbReference type="NCBIfam" id="TIGR00441">
    <property type="entry name" value="gmhA"/>
    <property type="match status" value="1"/>
</dbReference>
<dbReference type="NCBIfam" id="NF010546">
    <property type="entry name" value="PRK13936.1"/>
    <property type="match status" value="1"/>
</dbReference>
<dbReference type="PANTHER" id="PTHR30390:SF6">
    <property type="entry name" value="DNAA INITIATOR-ASSOCIATING PROTEIN DIAA"/>
    <property type="match status" value="1"/>
</dbReference>
<dbReference type="PANTHER" id="PTHR30390">
    <property type="entry name" value="SEDOHEPTULOSE 7-PHOSPHATE ISOMERASE / DNAA INITIATOR-ASSOCIATING FACTOR FOR REPLICATION INITIATION"/>
    <property type="match status" value="1"/>
</dbReference>
<dbReference type="Pfam" id="PF13580">
    <property type="entry name" value="SIS_2"/>
    <property type="match status" value="1"/>
</dbReference>
<dbReference type="SUPFAM" id="SSF53697">
    <property type="entry name" value="SIS domain"/>
    <property type="match status" value="1"/>
</dbReference>
<dbReference type="PROSITE" id="PS51464">
    <property type="entry name" value="SIS"/>
    <property type="match status" value="1"/>
</dbReference>
<gene>
    <name evidence="1" type="primary">gmhA</name>
    <name type="ordered locus">NGK_2255</name>
</gene>
<name>GMHA_NEIG2</name>
<reference key="1">
    <citation type="journal article" date="2008" name="J. Bacteriol.">
        <title>Complete genome sequence of Neisseria gonorrhoeae NCCP11945.</title>
        <authorList>
            <person name="Chung G.T."/>
            <person name="Yoo J.S."/>
            <person name="Oh H.B."/>
            <person name="Lee Y.S."/>
            <person name="Cha S.H."/>
            <person name="Kim S.J."/>
            <person name="Yoo C.K."/>
        </authorList>
    </citation>
    <scope>NUCLEOTIDE SEQUENCE [LARGE SCALE GENOMIC DNA]</scope>
    <source>
        <strain>NCCP11945</strain>
    </source>
</reference>
<feature type="chain" id="PRO_1000092281" description="Phosphoheptose isomerase">
    <location>
        <begin position="1"/>
        <end position="197"/>
    </location>
</feature>
<feature type="domain" description="SIS" evidence="1">
    <location>
        <begin position="37"/>
        <end position="197"/>
    </location>
</feature>
<feature type="binding site" evidence="1">
    <location>
        <begin position="52"/>
        <end position="54"/>
    </location>
    <ligand>
        <name>substrate</name>
    </ligand>
</feature>
<feature type="binding site" evidence="1">
    <location>
        <position position="61"/>
    </location>
    <ligand>
        <name>Zn(2+)</name>
        <dbReference type="ChEBI" id="CHEBI:29105"/>
    </ligand>
</feature>
<feature type="binding site" evidence="1">
    <location>
        <position position="65"/>
    </location>
    <ligand>
        <name>substrate</name>
    </ligand>
</feature>
<feature type="binding site" evidence="1">
    <location>
        <position position="65"/>
    </location>
    <ligand>
        <name>Zn(2+)</name>
        <dbReference type="ChEBI" id="CHEBI:29105"/>
    </ligand>
</feature>
<feature type="binding site" evidence="1">
    <location>
        <begin position="94"/>
        <end position="95"/>
    </location>
    <ligand>
        <name>substrate</name>
    </ligand>
</feature>
<feature type="binding site" evidence="1">
    <location>
        <begin position="120"/>
        <end position="122"/>
    </location>
    <ligand>
        <name>substrate</name>
    </ligand>
</feature>
<feature type="binding site" evidence="1">
    <location>
        <position position="125"/>
    </location>
    <ligand>
        <name>substrate</name>
    </ligand>
</feature>
<feature type="binding site" evidence="1">
    <location>
        <position position="175"/>
    </location>
    <ligand>
        <name>substrate</name>
    </ligand>
</feature>
<feature type="binding site" evidence="1">
    <location>
        <position position="175"/>
    </location>
    <ligand>
        <name>Zn(2+)</name>
        <dbReference type="ChEBI" id="CHEBI:29105"/>
    </ligand>
</feature>
<feature type="binding site" evidence="1">
    <location>
        <position position="183"/>
    </location>
    <ligand>
        <name>Zn(2+)</name>
        <dbReference type="ChEBI" id="CHEBI:29105"/>
    </ligand>
</feature>
<evidence type="ECO:0000255" key="1">
    <source>
        <dbReference type="HAMAP-Rule" id="MF_00067"/>
    </source>
</evidence>
<protein>
    <recommendedName>
        <fullName evidence="1">Phosphoheptose isomerase</fullName>
        <ecNumber evidence="1">5.3.1.28</ecNumber>
    </recommendedName>
    <alternativeName>
        <fullName evidence="1">Sedoheptulose 7-phosphate isomerase</fullName>
    </alternativeName>
</protein>
<sequence>MTTLQERVAAHFAESIRAKQEAEKILVEPTVQAAELMLQCLMNDGKILACGNGGSAADAQHFAAEMTGRFEKERMELAAVALTTDTSALTAIGNDYGFDHVFSKQVRALGRAGDVLVGISTSGNSANVIEAVKAAHERDMHVIALTGRDGGKIAAMLKDTDVLLNVPHPRTARIQENHILLIHAMCDCIDSVLLEGM</sequence>
<comment type="function">
    <text evidence="1">Catalyzes the isomerization of sedoheptulose 7-phosphate in D-glycero-D-manno-heptose 7-phosphate.</text>
</comment>
<comment type="catalytic activity">
    <reaction evidence="1">
        <text>2 D-sedoheptulose 7-phosphate = D-glycero-alpha-D-manno-heptose 7-phosphate + D-glycero-beta-D-manno-heptose 7-phosphate</text>
        <dbReference type="Rhea" id="RHEA:27489"/>
        <dbReference type="ChEBI" id="CHEBI:57483"/>
        <dbReference type="ChEBI" id="CHEBI:60203"/>
        <dbReference type="ChEBI" id="CHEBI:60204"/>
        <dbReference type="EC" id="5.3.1.28"/>
    </reaction>
</comment>
<comment type="cofactor">
    <cofactor evidence="1">
        <name>Zn(2+)</name>
        <dbReference type="ChEBI" id="CHEBI:29105"/>
    </cofactor>
    <text evidence="1">Binds 1 zinc ion per subunit.</text>
</comment>
<comment type="pathway">
    <text evidence="1">Carbohydrate biosynthesis; D-glycero-D-manno-heptose 7-phosphate biosynthesis; D-glycero-alpha-D-manno-heptose 7-phosphate and D-glycero-beta-D-manno-heptose 7-phosphate from sedoheptulose 7-phosphate: step 1/1.</text>
</comment>
<comment type="subunit">
    <text evidence="1">Homotetramer.</text>
</comment>
<comment type="subcellular location">
    <subcellularLocation>
        <location evidence="1">Cytoplasm</location>
    </subcellularLocation>
</comment>
<comment type="miscellaneous">
    <text evidence="1">The reaction produces a racemic mixture of D-glycero-alpha-D-manno-heptose 7-phosphate and D-glycero-beta-D-manno-heptose 7-phosphate.</text>
</comment>
<comment type="similarity">
    <text evidence="1">Belongs to the SIS family. GmhA subfamily.</text>
</comment>